<name>ENTC3_STAAN</name>
<evidence type="ECO:0000250" key="1"/>
<evidence type="ECO:0000250" key="2">
    <source>
        <dbReference type="UniProtKB" id="P0A0L5"/>
    </source>
</evidence>
<evidence type="ECO:0000250" key="3">
    <source>
        <dbReference type="UniProtKB" id="P34071"/>
    </source>
</evidence>
<evidence type="ECO:0000305" key="4"/>
<dbReference type="EMBL" id="BA000018">
    <property type="protein sequence ID" value="BAB43097.1"/>
    <property type="molecule type" value="Genomic_DNA"/>
</dbReference>
<dbReference type="SMR" id="P0A0L4"/>
<dbReference type="Allergome" id="2141">
    <property type="allergen name" value="Sta a SEC"/>
</dbReference>
<dbReference type="EnsemblBacteria" id="BAB43097">
    <property type="protein sequence ID" value="BAB43097"/>
    <property type="gene ID" value="BAB43097"/>
</dbReference>
<dbReference type="KEGG" id="sau:SA1817"/>
<dbReference type="HOGENOM" id="CLU_093855_0_1_9"/>
<dbReference type="PRO" id="PR:P0A0L4"/>
<dbReference type="GO" id="GO:0005576">
    <property type="term" value="C:extracellular region"/>
    <property type="evidence" value="ECO:0007669"/>
    <property type="project" value="UniProtKB-SubCell"/>
</dbReference>
<dbReference type="GO" id="GO:0046872">
    <property type="term" value="F:metal ion binding"/>
    <property type="evidence" value="ECO:0007669"/>
    <property type="project" value="UniProtKB-KW"/>
</dbReference>
<dbReference type="GO" id="GO:0090729">
    <property type="term" value="F:toxin activity"/>
    <property type="evidence" value="ECO:0007669"/>
    <property type="project" value="UniProtKB-KW"/>
</dbReference>
<dbReference type="Gene3D" id="2.40.50.110">
    <property type="match status" value="1"/>
</dbReference>
<dbReference type="Gene3D" id="3.10.20.120">
    <property type="match status" value="1"/>
</dbReference>
<dbReference type="InterPro" id="IPR008992">
    <property type="entry name" value="Enterotoxin"/>
</dbReference>
<dbReference type="InterPro" id="IPR006126">
    <property type="entry name" value="Staph/Strept_toxin_CS"/>
</dbReference>
<dbReference type="InterPro" id="IPR006173">
    <property type="entry name" value="Staph_tox_OB"/>
</dbReference>
<dbReference type="InterPro" id="IPR016091">
    <property type="entry name" value="SuperAg_toxin_C"/>
</dbReference>
<dbReference type="InterPro" id="IPR013307">
    <property type="entry name" value="Superantigen_bac"/>
</dbReference>
<dbReference type="InterPro" id="IPR006123">
    <property type="entry name" value="Toxin_b-grasp_Staph/Strep"/>
</dbReference>
<dbReference type="InterPro" id="IPR006177">
    <property type="entry name" value="Toxin_bac"/>
</dbReference>
<dbReference type="Pfam" id="PF02876">
    <property type="entry name" value="Stap_Strp_tox_C"/>
    <property type="match status" value="1"/>
</dbReference>
<dbReference type="Pfam" id="PF01123">
    <property type="entry name" value="Stap_Strp_toxin"/>
    <property type="match status" value="1"/>
</dbReference>
<dbReference type="PRINTS" id="PR00279">
    <property type="entry name" value="BACTRLTOXIN"/>
</dbReference>
<dbReference type="PRINTS" id="PR01898">
    <property type="entry name" value="SAGSUPRFAMLY"/>
</dbReference>
<dbReference type="SUPFAM" id="SSF50203">
    <property type="entry name" value="Bacterial enterotoxins"/>
    <property type="match status" value="1"/>
</dbReference>
<dbReference type="SUPFAM" id="SSF54334">
    <property type="entry name" value="Superantigen toxins, C-terminal domain"/>
    <property type="match status" value="1"/>
</dbReference>
<dbReference type="PROSITE" id="PS00277">
    <property type="entry name" value="STAPH_STREP_TOXIN_1"/>
    <property type="match status" value="1"/>
</dbReference>
<dbReference type="PROSITE" id="PS00278">
    <property type="entry name" value="STAPH_STREP_TOXIN_2"/>
    <property type="match status" value="1"/>
</dbReference>
<keyword id="KW-1015">Disulfide bond</keyword>
<keyword id="KW-0260">Enterotoxin</keyword>
<keyword id="KW-0479">Metal-binding</keyword>
<keyword id="KW-0964">Secreted</keyword>
<keyword id="KW-0732">Signal</keyword>
<keyword id="KW-0766">Superantigen</keyword>
<keyword id="KW-0800">Toxin</keyword>
<keyword id="KW-0843">Virulence</keyword>
<keyword id="KW-0862">Zinc</keyword>
<comment type="function">
    <text evidence="2 3">Staphylococcal enterotoxin that activates the host immune system by binding as unprocessed molecules to major histocompatibility (MHC) complex class II and T-cell receptor (TCR) molecules. In turn, this ternary complex activates a large number of T-lymphocytes initiating a systemic release of pro-inflammatory cytokines (By similarity). Also causes the intoxication staphylococcal food poisoning syndrome (By similarity).</text>
</comment>
<comment type="subunit">
    <text evidence="2">Interacts with MHC class II molecules composed of alpha/HLA-DRA and beta/HLA-DRB1 chains. Interacts with host T-cell receptor/TCR beta variable chain TRBV8-2.</text>
</comment>
<comment type="subcellular location">
    <subcellularLocation>
        <location>Secreted</location>
    </subcellularLocation>
</comment>
<comment type="similarity">
    <text evidence="4">Belongs to the staphylococcal/streptococcal toxin family.</text>
</comment>
<reference key="1">
    <citation type="journal article" date="2001" name="Lancet">
        <title>Whole genome sequencing of meticillin-resistant Staphylococcus aureus.</title>
        <authorList>
            <person name="Kuroda M."/>
            <person name="Ohta T."/>
            <person name="Uchiyama I."/>
            <person name="Baba T."/>
            <person name="Yuzawa H."/>
            <person name="Kobayashi I."/>
            <person name="Cui L."/>
            <person name="Oguchi A."/>
            <person name="Aoki K."/>
            <person name="Nagai Y."/>
            <person name="Lian J.-Q."/>
            <person name="Ito T."/>
            <person name="Kanamori M."/>
            <person name="Matsumaru H."/>
            <person name="Maruyama A."/>
            <person name="Murakami H."/>
            <person name="Hosoyama A."/>
            <person name="Mizutani-Ui Y."/>
            <person name="Takahashi N.K."/>
            <person name="Sawano T."/>
            <person name="Inoue R."/>
            <person name="Kaito C."/>
            <person name="Sekimizu K."/>
            <person name="Hirakawa H."/>
            <person name="Kuhara S."/>
            <person name="Goto S."/>
            <person name="Yabuzaki J."/>
            <person name="Kanehisa M."/>
            <person name="Yamashita A."/>
            <person name="Oshima K."/>
            <person name="Furuya K."/>
            <person name="Yoshino C."/>
            <person name="Shiba T."/>
            <person name="Hattori M."/>
            <person name="Ogasawara N."/>
            <person name="Hayashi H."/>
            <person name="Hiramatsu K."/>
        </authorList>
    </citation>
    <scope>NUCLEOTIDE SEQUENCE [LARGE SCALE GENOMIC DNA]</scope>
    <source>
        <strain>N315</strain>
    </source>
</reference>
<organism>
    <name type="scientific">Staphylococcus aureus (strain N315)</name>
    <dbReference type="NCBI Taxonomy" id="158879"/>
    <lineage>
        <taxon>Bacteria</taxon>
        <taxon>Bacillati</taxon>
        <taxon>Bacillota</taxon>
        <taxon>Bacilli</taxon>
        <taxon>Bacillales</taxon>
        <taxon>Staphylococcaceae</taxon>
        <taxon>Staphylococcus</taxon>
    </lineage>
</organism>
<feature type="signal peptide" evidence="1">
    <location>
        <begin position="1"/>
        <end position="27"/>
    </location>
</feature>
<feature type="chain" id="PRO_0000035610" description="Enterotoxin type C-3">
    <location>
        <begin position="28"/>
        <end position="266"/>
    </location>
</feature>
<feature type="disulfide bond" evidence="1">
    <location>
        <begin position="120"/>
        <end position="137"/>
    </location>
</feature>
<sequence>MYKRLFISRVILIFALILVISTPNVLAESQPDPMPDDLHKSSEFTGTMGNMKYLYDDHYVSATKVKSVDKFLAHDLIYNISDKKLKNYDKVKTELLNEDLAKKYKDEVVDVYGSNYYVNCYFSSKDNVGKVTGGKTCMYGGITKHEGNHFDNGNLQNVLVRVYENKRNTISFEVQTDKKSVTAQELDIKARNFLINKKNLYEFNSSPYETGYIKFIENNGNTFWYDMMPAPGDKFDQSKYLMMYNDNKTVDSKSVKIEVHLTTKNG</sequence>
<protein>
    <recommendedName>
        <fullName>Enterotoxin type C-3</fullName>
    </recommendedName>
    <alternativeName>
        <fullName>SEC3</fullName>
    </alternativeName>
</protein>
<gene>
    <name type="primary">entC3</name>
    <name type="ordered locus">SA1817</name>
</gene>
<proteinExistence type="inferred from homology"/>
<accession>P0A0L4</accession>
<accession>P23313</accession>